<sequence>MAKILYCSFCGKSQQEVKNIISGRDGNICNECVSKCAEKIRSTGSTSAEDISFEKLPKPVEIKKYLDDYIIGQDNAKKVLSVAVYNHYKRITSNLTKDDDTELKKSNVLLIGPTGSGKTLFAQTLAKLLNVPFAIADATTLTEAGYVGDDVENIIVRLLQNADFDVAKAQKGIIYIDEIDKIARKSESTSITRDVSGEGVQQALLKLIEGTVSSVPPKGGRKHPNQDMIQVDTSDILFICGGAFAGIEKVIKHRMDKVSIGFNSDVIQQKNSLDSDKLMQKIESEDLTRFGLIPELIGRLPIVTVLNELKEEDLVRILTEPKNALIKQYIKLFKFDNVNIEFTDQALVEIAKKAITKKTGARGLRTILENVLLEVMFHIPSSEDIEKVIINDKVILEQQEPILATKTQQQKQLKDII</sequence>
<evidence type="ECO:0000255" key="1">
    <source>
        <dbReference type="HAMAP-Rule" id="MF_00175"/>
    </source>
</evidence>
<evidence type="ECO:0000255" key="2">
    <source>
        <dbReference type="PROSITE-ProRule" id="PRU01250"/>
    </source>
</evidence>
<comment type="function">
    <text evidence="1">ATP-dependent specificity component of the Clp protease. It directs the protease to specific substrates. Can perform chaperone functions in the absence of ClpP.</text>
</comment>
<comment type="subunit">
    <text evidence="1">Component of the ClpX-ClpP complex. Forms a hexameric ring that, in the presence of ATP, binds to fourteen ClpP subunits assembled into a disk-like structure with a central cavity, resembling the structure of eukaryotic proteasomes.</text>
</comment>
<comment type="similarity">
    <text evidence="1">Belongs to the ClpX chaperone family.</text>
</comment>
<accession>Q5NH46</accession>
<name>CLPX_FRATT</name>
<proteinExistence type="inferred from homology"/>
<organism>
    <name type="scientific">Francisella tularensis subsp. tularensis (strain SCHU S4 / Schu 4)</name>
    <dbReference type="NCBI Taxonomy" id="177416"/>
    <lineage>
        <taxon>Bacteria</taxon>
        <taxon>Pseudomonadati</taxon>
        <taxon>Pseudomonadota</taxon>
        <taxon>Gammaproteobacteria</taxon>
        <taxon>Thiotrichales</taxon>
        <taxon>Francisellaceae</taxon>
        <taxon>Francisella</taxon>
    </lineage>
</organism>
<protein>
    <recommendedName>
        <fullName evidence="1">ATP-dependent Clp protease ATP-binding subunit ClpX</fullName>
    </recommendedName>
</protein>
<dbReference type="EMBL" id="AJ749949">
    <property type="protein sequence ID" value="CAG45258.1"/>
    <property type="molecule type" value="Genomic_DNA"/>
</dbReference>
<dbReference type="RefSeq" id="WP_003023409.1">
    <property type="nucleotide sequence ID" value="NC_006570.2"/>
</dbReference>
<dbReference type="RefSeq" id="YP_169646.1">
    <property type="nucleotide sequence ID" value="NC_006570.2"/>
</dbReference>
<dbReference type="SMR" id="Q5NH46"/>
<dbReference type="STRING" id="177416.FTT_0625"/>
<dbReference type="DNASU" id="3192507"/>
<dbReference type="EnsemblBacteria" id="CAG45258">
    <property type="protein sequence ID" value="CAG45258"/>
    <property type="gene ID" value="FTT_0625"/>
</dbReference>
<dbReference type="KEGG" id="ftu:FTT_0625"/>
<dbReference type="eggNOG" id="COG1219">
    <property type="taxonomic scope" value="Bacteria"/>
</dbReference>
<dbReference type="OrthoDB" id="9804062at2"/>
<dbReference type="Proteomes" id="UP000001174">
    <property type="component" value="Chromosome"/>
</dbReference>
<dbReference type="GO" id="GO:0009376">
    <property type="term" value="C:HslUV protease complex"/>
    <property type="evidence" value="ECO:0007669"/>
    <property type="project" value="TreeGrafter"/>
</dbReference>
<dbReference type="GO" id="GO:0005524">
    <property type="term" value="F:ATP binding"/>
    <property type="evidence" value="ECO:0007669"/>
    <property type="project" value="UniProtKB-UniRule"/>
</dbReference>
<dbReference type="GO" id="GO:0016887">
    <property type="term" value="F:ATP hydrolysis activity"/>
    <property type="evidence" value="ECO:0007669"/>
    <property type="project" value="InterPro"/>
</dbReference>
<dbReference type="GO" id="GO:0140662">
    <property type="term" value="F:ATP-dependent protein folding chaperone"/>
    <property type="evidence" value="ECO:0007669"/>
    <property type="project" value="InterPro"/>
</dbReference>
<dbReference type="GO" id="GO:0046983">
    <property type="term" value="F:protein dimerization activity"/>
    <property type="evidence" value="ECO:0007669"/>
    <property type="project" value="InterPro"/>
</dbReference>
<dbReference type="GO" id="GO:0051082">
    <property type="term" value="F:unfolded protein binding"/>
    <property type="evidence" value="ECO:0007669"/>
    <property type="project" value="UniProtKB-UniRule"/>
</dbReference>
<dbReference type="GO" id="GO:0008270">
    <property type="term" value="F:zinc ion binding"/>
    <property type="evidence" value="ECO:0007669"/>
    <property type="project" value="InterPro"/>
</dbReference>
<dbReference type="GO" id="GO:0051301">
    <property type="term" value="P:cell division"/>
    <property type="evidence" value="ECO:0007669"/>
    <property type="project" value="TreeGrafter"/>
</dbReference>
<dbReference type="GO" id="GO:0051603">
    <property type="term" value="P:proteolysis involved in protein catabolic process"/>
    <property type="evidence" value="ECO:0007669"/>
    <property type="project" value="TreeGrafter"/>
</dbReference>
<dbReference type="CDD" id="cd19497">
    <property type="entry name" value="RecA-like_ClpX"/>
    <property type="match status" value="1"/>
</dbReference>
<dbReference type="FunFam" id="1.10.8.60:FF:000002">
    <property type="entry name" value="ATP-dependent Clp protease ATP-binding subunit ClpX"/>
    <property type="match status" value="1"/>
</dbReference>
<dbReference type="FunFam" id="3.40.50.300:FF:000005">
    <property type="entry name" value="ATP-dependent Clp protease ATP-binding subunit ClpX"/>
    <property type="match status" value="1"/>
</dbReference>
<dbReference type="Gene3D" id="1.10.8.60">
    <property type="match status" value="1"/>
</dbReference>
<dbReference type="Gene3D" id="6.20.220.10">
    <property type="entry name" value="ClpX chaperone, C4-type zinc finger domain"/>
    <property type="match status" value="1"/>
</dbReference>
<dbReference type="Gene3D" id="3.40.50.300">
    <property type="entry name" value="P-loop containing nucleotide triphosphate hydrolases"/>
    <property type="match status" value="1"/>
</dbReference>
<dbReference type="HAMAP" id="MF_00175">
    <property type="entry name" value="ClpX"/>
    <property type="match status" value="1"/>
</dbReference>
<dbReference type="InterPro" id="IPR003593">
    <property type="entry name" value="AAA+_ATPase"/>
</dbReference>
<dbReference type="InterPro" id="IPR050052">
    <property type="entry name" value="ATP-dep_Clp_protease_ClpX"/>
</dbReference>
<dbReference type="InterPro" id="IPR003959">
    <property type="entry name" value="ATPase_AAA_core"/>
</dbReference>
<dbReference type="InterPro" id="IPR019489">
    <property type="entry name" value="Clp_ATPase_C"/>
</dbReference>
<dbReference type="InterPro" id="IPR004487">
    <property type="entry name" value="Clp_protease_ATP-bd_su_ClpX"/>
</dbReference>
<dbReference type="InterPro" id="IPR046425">
    <property type="entry name" value="ClpX_bact"/>
</dbReference>
<dbReference type="InterPro" id="IPR027417">
    <property type="entry name" value="P-loop_NTPase"/>
</dbReference>
<dbReference type="InterPro" id="IPR010603">
    <property type="entry name" value="Znf_CppX_C4"/>
</dbReference>
<dbReference type="InterPro" id="IPR038366">
    <property type="entry name" value="Znf_CppX_C4_sf"/>
</dbReference>
<dbReference type="NCBIfam" id="TIGR00382">
    <property type="entry name" value="clpX"/>
    <property type="match status" value="1"/>
</dbReference>
<dbReference type="NCBIfam" id="NF003745">
    <property type="entry name" value="PRK05342.1"/>
    <property type="match status" value="1"/>
</dbReference>
<dbReference type="PANTHER" id="PTHR48102:SF7">
    <property type="entry name" value="ATP-DEPENDENT CLP PROTEASE ATP-BINDING SUBUNIT CLPX-LIKE, MITOCHONDRIAL"/>
    <property type="match status" value="1"/>
</dbReference>
<dbReference type="PANTHER" id="PTHR48102">
    <property type="entry name" value="ATP-DEPENDENT CLP PROTEASE ATP-BINDING SUBUNIT CLPX-LIKE, MITOCHONDRIAL-RELATED"/>
    <property type="match status" value="1"/>
</dbReference>
<dbReference type="Pfam" id="PF07724">
    <property type="entry name" value="AAA_2"/>
    <property type="match status" value="1"/>
</dbReference>
<dbReference type="Pfam" id="PF10431">
    <property type="entry name" value="ClpB_D2-small"/>
    <property type="match status" value="1"/>
</dbReference>
<dbReference type="Pfam" id="PF06689">
    <property type="entry name" value="zf-C4_ClpX"/>
    <property type="match status" value="1"/>
</dbReference>
<dbReference type="SMART" id="SM00382">
    <property type="entry name" value="AAA"/>
    <property type="match status" value="1"/>
</dbReference>
<dbReference type="SMART" id="SM01086">
    <property type="entry name" value="ClpB_D2-small"/>
    <property type="match status" value="1"/>
</dbReference>
<dbReference type="SMART" id="SM00994">
    <property type="entry name" value="zf-C4_ClpX"/>
    <property type="match status" value="1"/>
</dbReference>
<dbReference type="SUPFAM" id="SSF57716">
    <property type="entry name" value="Glucocorticoid receptor-like (DNA-binding domain)"/>
    <property type="match status" value="1"/>
</dbReference>
<dbReference type="SUPFAM" id="SSF52540">
    <property type="entry name" value="P-loop containing nucleoside triphosphate hydrolases"/>
    <property type="match status" value="1"/>
</dbReference>
<dbReference type="PROSITE" id="PS51902">
    <property type="entry name" value="CLPX_ZB"/>
    <property type="match status" value="1"/>
</dbReference>
<feature type="chain" id="PRO_0000160357" description="ATP-dependent Clp protease ATP-binding subunit ClpX">
    <location>
        <begin position="1"/>
        <end position="417"/>
    </location>
</feature>
<feature type="domain" description="ClpX-type ZB" evidence="2">
    <location>
        <begin position="1"/>
        <end position="48"/>
    </location>
</feature>
<feature type="binding site" evidence="2">
    <location>
        <position position="7"/>
    </location>
    <ligand>
        <name>Zn(2+)</name>
        <dbReference type="ChEBI" id="CHEBI:29105"/>
    </ligand>
</feature>
<feature type="binding site" evidence="2">
    <location>
        <position position="10"/>
    </location>
    <ligand>
        <name>Zn(2+)</name>
        <dbReference type="ChEBI" id="CHEBI:29105"/>
    </ligand>
</feature>
<feature type="binding site" evidence="2">
    <location>
        <position position="29"/>
    </location>
    <ligand>
        <name>Zn(2+)</name>
        <dbReference type="ChEBI" id="CHEBI:29105"/>
    </ligand>
</feature>
<feature type="binding site" evidence="2">
    <location>
        <position position="32"/>
    </location>
    <ligand>
        <name>Zn(2+)</name>
        <dbReference type="ChEBI" id="CHEBI:29105"/>
    </ligand>
</feature>
<feature type="binding site" evidence="1">
    <location>
        <begin position="113"/>
        <end position="120"/>
    </location>
    <ligand>
        <name>ATP</name>
        <dbReference type="ChEBI" id="CHEBI:30616"/>
    </ligand>
</feature>
<reference key="1">
    <citation type="journal article" date="2005" name="Nat. Genet.">
        <title>The complete genome sequence of Francisella tularensis, the causative agent of tularemia.</title>
        <authorList>
            <person name="Larsson P."/>
            <person name="Oyston P.C.F."/>
            <person name="Chain P."/>
            <person name="Chu M.C."/>
            <person name="Duffield M."/>
            <person name="Fuxelius H.-H."/>
            <person name="Garcia E."/>
            <person name="Haelltorp G."/>
            <person name="Johansson D."/>
            <person name="Isherwood K.E."/>
            <person name="Karp P.D."/>
            <person name="Larsson E."/>
            <person name="Liu Y."/>
            <person name="Michell S."/>
            <person name="Prior J."/>
            <person name="Prior R."/>
            <person name="Malfatti S."/>
            <person name="Sjoestedt A."/>
            <person name="Svensson K."/>
            <person name="Thompson N."/>
            <person name="Vergez L."/>
            <person name="Wagg J.K."/>
            <person name="Wren B.W."/>
            <person name="Lindler L.E."/>
            <person name="Andersson S.G.E."/>
            <person name="Forsman M."/>
            <person name="Titball R.W."/>
        </authorList>
    </citation>
    <scope>NUCLEOTIDE SEQUENCE [LARGE SCALE GENOMIC DNA]</scope>
    <source>
        <strain>SCHU S4 / Schu 4</strain>
    </source>
</reference>
<keyword id="KW-0067">ATP-binding</keyword>
<keyword id="KW-0143">Chaperone</keyword>
<keyword id="KW-0479">Metal-binding</keyword>
<keyword id="KW-0547">Nucleotide-binding</keyword>
<keyword id="KW-1185">Reference proteome</keyword>
<keyword id="KW-0862">Zinc</keyword>
<gene>
    <name evidence="1" type="primary">clpX</name>
    <name type="ordered locus">FTT_0625</name>
</gene>